<gene>
    <name type="primary">lsrA</name>
    <name type="ordered locus">SFV_1568</name>
</gene>
<protein>
    <recommendedName>
        <fullName evidence="1">Autoinducer 2 import ATP-binding protein LsrA</fullName>
        <shortName evidence="1">AI-2 import ATP-binding protein LsrA</shortName>
        <ecNumber evidence="1">7.6.2.13</ecNumber>
    </recommendedName>
</protein>
<proteinExistence type="inferred from homology"/>
<accession>Q0T4L9</accession>
<sequence>MQTSDTRALPLLCARSVYKQYSGVNVLKGIDFTLHQGEVHALLGGNGAGKSTLMKIIAGITPADSGTLEIGGNNYARLTPVHAHQLGIYLVPQEPLLFPSLSIKENILFGLAKKQLSMQKMKNLLAALGCQFDLHSLAGSLDVADRQMVEILRGVMRDSRILILDEPTASLTPAETERLFSRLQELLATGVGIVFISHKLPEIRQIADRISVMRDGTIALSGKTSELSTDDIIQAITPAVREKSLSASQKLWLELPGNRPQHAVGTPVLTLENLTGEGFRNVSLTLNAGEILGLAGLVGAGRTELAETLYGLRTLRGGRIMLNGKEINKLSTGERLLRGLVYLPEDRQSSGLNLDASLAWNVCALTHNLRGFWAKTAKDNATLERYRRALNIKFNQPEQAARTLSGSNQQKILIAKCLEASPQALIVDEPTRGVDVSARNDIYQLLRSIAAQNVAVLLISSDMEEIELMADRVYVMHQGEITHSALTGRDINVETIMRVAFGDSQRQEASC</sequence>
<reference key="1">
    <citation type="journal article" date="2006" name="BMC Genomics">
        <title>Complete genome sequence of Shigella flexneri 5b and comparison with Shigella flexneri 2a.</title>
        <authorList>
            <person name="Nie H."/>
            <person name="Yang F."/>
            <person name="Zhang X."/>
            <person name="Yang J."/>
            <person name="Chen L."/>
            <person name="Wang J."/>
            <person name="Xiong Z."/>
            <person name="Peng J."/>
            <person name="Sun L."/>
            <person name="Dong J."/>
            <person name="Xue Y."/>
            <person name="Xu X."/>
            <person name="Chen S."/>
            <person name="Yao Z."/>
            <person name="Shen Y."/>
            <person name="Jin Q."/>
        </authorList>
    </citation>
    <scope>NUCLEOTIDE SEQUENCE [LARGE SCALE GENOMIC DNA]</scope>
    <source>
        <strain>8401</strain>
    </source>
</reference>
<dbReference type="EC" id="7.6.2.13" evidence="1"/>
<dbReference type="EMBL" id="CP000266">
    <property type="protein sequence ID" value="ABF03746.1"/>
    <property type="molecule type" value="Genomic_DNA"/>
</dbReference>
<dbReference type="RefSeq" id="WP_001194877.1">
    <property type="nucleotide sequence ID" value="NC_008258.1"/>
</dbReference>
<dbReference type="SMR" id="Q0T4L9"/>
<dbReference type="KEGG" id="sfv:SFV_1568"/>
<dbReference type="HOGENOM" id="CLU_000604_92_3_6"/>
<dbReference type="Proteomes" id="UP000000659">
    <property type="component" value="Chromosome"/>
</dbReference>
<dbReference type="GO" id="GO:0005886">
    <property type="term" value="C:plasma membrane"/>
    <property type="evidence" value="ECO:0007669"/>
    <property type="project" value="UniProtKB-SubCell"/>
</dbReference>
<dbReference type="GO" id="GO:0005524">
    <property type="term" value="F:ATP binding"/>
    <property type="evidence" value="ECO:0007669"/>
    <property type="project" value="UniProtKB-KW"/>
</dbReference>
<dbReference type="GO" id="GO:0016887">
    <property type="term" value="F:ATP hydrolysis activity"/>
    <property type="evidence" value="ECO:0007669"/>
    <property type="project" value="InterPro"/>
</dbReference>
<dbReference type="CDD" id="cd03216">
    <property type="entry name" value="ABC_Carb_Monos_I"/>
    <property type="match status" value="1"/>
</dbReference>
<dbReference type="CDD" id="cd03215">
    <property type="entry name" value="ABC_Carb_Monos_II"/>
    <property type="match status" value="1"/>
</dbReference>
<dbReference type="Gene3D" id="3.40.50.300">
    <property type="entry name" value="P-loop containing nucleotide triphosphate hydrolases"/>
    <property type="match status" value="2"/>
</dbReference>
<dbReference type="InterPro" id="IPR003593">
    <property type="entry name" value="AAA+_ATPase"/>
</dbReference>
<dbReference type="InterPro" id="IPR050107">
    <property type="entry name" value="ABC_carbohydrate_import_ATPase"/>
</dbReference>
<dbReference type="InterPro" id="IPR003439">
    <property type="entry name" value="ABC_transporter-like_ATP-bd"/>
</dbReference>
<dbReference type="InterPro" id="IPR027417">
    <property type="entry name" value="P-loop_NTPase"/>
</dbReference>
<dbReference type="NCBIfam" id="NF011967">
    <property type="entry name" value="PRK15439.1"/>
    <property type="match status" value="1"/>
</dbReference>
<dbReference type="PANTHER" id="PTHR43790:SF2">
    <property type="entry name" value="AUTOINDUCER 2 IMPORT ATP-BINDING PROTEIN LSRA"/>
    <property type="match status" value="1"/>
</dbReference>
<dbReference type="PANTHER" id="PTHR43790">
    <property type="entry name" value="CARBOHYDRATE TRANSPORT ATP-BINDING PROTEIN MG119-RELATED"/>
    <property type="match status" value="1"/>
</dbReference>
<dbReference type="Pfam" id="PF00005">
    <property type="entry name" value="ABC_tran"/>
    <property type="match status" value="2"/>
</dbReference>
<dbReference type="SMART" id="SM00382">
    <property type="entry name" value="AAA"/>
    <property type="match status" value="2"/>
</dbReference>
<dbReference type="SUPFAM" id="SSF52540">
    <property type="entry name" value="P-loop containing nucleoside triphosphate hydrolases"/>
    <property type="match status" value="2"/>
</dbReference>
<dbReference type="PROSITE" id="PS50893">
    <property type="entry name" value="ABC_TRANSPORTER_2"/>
    <property type="match status" value="2"/>
</dbReference>
<evidence type="ECO:0000250" key="1">
    <source>
        <dbReference type="UniProtKB" id="P77257"/>
    </source>
</evidence>
<evidence type="ECO:0000255" key="2">
    <source>
        <dbReference type="PROSITE-ProRule" id="PRU00434"/>
    </source>
</evidence>
<evidence type="ECO:0000305" key="3"/>
<feature type="chain" id="PRO_0000351306" description="Autoinducer 2 import ATP-binding protein LsrA">
    <location>
        <begin position="1"/>
        <end position="511"/>
    </location>
</feature>
<feature type="domain" description="ABC transporter 1" evidence="2">
    <location>
        <begin position="12"/>
        <end position="240"/>
    </location>
</feature>
<feature type="domain" description="ABC transporter 2" evidence="2">
    <location>
        <begin position="264"/>
        <end position="503"/>
    </location>
</feature>
<feature type="binding site" evidence="2">
    <location>
        <begin position="44"/>
        <end position="51"/>
    </location>
    <ligand>
        <name>ATP</name>
        <dbReference type="ChEBI" id="CHEBI:30616"/>
    </ligand>
</feature>
<keyword id="KW-0067">ATP-binding</keyword>
<keyword id="KW-0997">Cell inner membrane</keyword>
<keyword id="KW-1003">Cell membrane</keyword>
<keyword id="KW-0472">Membrane</keyword>
<keyword id="KW-0547">Nucleotide-binding</keyword>
<keyword id="KW-0677">Repeat</keyword>
<keyword id="KW-1278">Translocase</keyword>
<keyword id="KW-0813">Transport</keyword>
<comment type="function">
    <text evidence="1">Part of the ABC transporter complex LsrABCD involved in autoinducer 2 (AI-2) import. Responsible for energy coupling to the transport system.</text>
</comment>
<comment type="catalytic activity">
    <reaction evidence="1">
        <text>ATP + H2O + (2R,4S)-2-methyl-2,3,3,4-tetrahydroxytetrahydrofuran-[AI-2-binding protein]Side 1 = ADP + phosphate + (2R,4S)-2-methyl-2,3,3,4-tetrahydroxytetrahydrofuranSide 2 + [AI-2-binding protein]Side 1.</text>
        <dbReference type="EC" id="7.6.2.13"/>
    </reaction>
</comment>
<comment type="subunit">
    <text evidence="1">The complex is composed of two ATP-binding proteins (LsrA), two transmembrane proteins (LsrC and LsrD) and a solute-binding protein (LsrB).</text>
</comment>
<comment type="subcellular location">
    <subcellularLocation>
        <location evidence="1">Cell inner membrane</location>
        <topology evidence="1">Peripheral membrane protein</topology>
    </subcellularLocation>
</comment>
<comment type="similarity">
    <text evidence="3">Belongs to the ABC transporter superfamily. AI-2 autoinducer porter (TC 3.A.1.2.8) family.</text>
</comment>
<organism>
    <name type="scientific">Shigella flexneri serotype 5b (strain 8401)</name>
    <dbReference type="NCBI Taxonomy" id="373384"/>
    <lineage>
        <taxon>Bacteria</taxon>
        <taxon>Pseudomonadati</taxon>
        <taxon>Pseudomonadota</taxon>
        <taxon>Gammaproteobacteria</taxon>
        <taxon>Enterobacterales</taxon>
        <taxon>Enterobacteriaceae</taxon>
        <taxon>Shigella</taxon>
    </lineage>
</organism>
<name>LSRA_SHIF8</name>